<reference key="1">
    <citation type="submission" date="2007-03" db="EMBL/GenBank/DDBJ databases">
        <title>Complete sequence of chromosome 1 of Burkholderia vietnamiensis G4.</title>
        <authorList>
            <consortium name="US DOE Joint Genome Institute"/>
            <person name="Copeland A."/>
            <person name="Lucas S."/>
            <person name="Lapidus A."/>
            <person name="Barry K."/>
            <person name="Detter J.C."/>
            <person name="Glavina del Rio T."/>
            <person name="Hammon N."/>
            <person name="Israni S."/>
            <person name="Dalin E."/>
            <person name="Tice H."/>
            <person name="Pitluck S."/>
            <person name="Chain P."/>
            <person name="Malfatti S."/>
            <person name="Shin M."/>
            <person name="Vergez L."/>
            <person name="Schmutz J."/>
            <person name="Larimer F."/>
            <person name="Land M."/>
            <person name="Hauser L."/>
            <person name="Kyrpides N."/>
            <person name="Tiedje J."/>
            <person name="Richardson P."/>
        </authorList>
    </citation>
    <scope>NUCLEOTIDE SEQUENCE [LARGE SCALE GENOMIC DNA]</scope>
    <source>
        <strain>G4 / LMG 22486</strain>
    </source>
</reference>
<comment type="function">
    <text evidence="1">This protein specifically catalyzes the removal of signal peptides from prolipoproteins.</text>
</comment>
<comment type="catalytic activity">
    <reaction evidence="1">
        <text>Release of signal peptides from bacterial membrane prolipoproteins. Hydrolyzes -Xaa-Yaa-Zaa-|-(S,diacylglyceryl)Cys-, in which Xaa is hydrophobic (preferably Leu), and Yaa (Ala or Ser) and Zaa (Gly or Ala) have small, neutral side chains.</text>
        <dbReference type="EC" id="3.4.23.36"/>
    </reaction>
</comment>
<comment type="pathway">
    <text evidence="1">Protein modification; lipoprotein biosynthesis (signal peptide cleavage).</text>
</comment>
<comment type="subcellular location">
    <subcellularLocation>
        <location evidence="1">Cell inner membrane</location>
        <topology evidence="1">Multi-pass membrane protein</topology>
    </subcellularLocation>
</comment>
<comment type="similarity">
    <text evidence="1">Belongs to the peptidase A8 family.</text>
</comment>
<organism>
    <name type="scientific">Burkholderia vietnamiensis (strain G4 / LMG 22486)</name>
    <name type="common">Burkholderia cepacia (strain R1808)</name>
    <dbReference type="NCBI Taxonomy" id="269482"/>
    <lineage>
        <taxon>Bacteria</taxon>
        <taxon>Pseudomonadati</taxon>
        <taxon>Pseudomonadota</taxon>
        <taxon>Betaproteobacteria</taxon>
        <taxon>Burkholderiales</taxon>
        <taxon>Burkholderiaceae</taxon>
        <taxon>Burkholderia</taxon>
        <taxon>Burkholderia cepacia complex</taxon>
    </lineage>
</organism>
<accession>A4JH33</accession>
<evidence type="ECO:0000255" key="1">
    <source>
        <dbReference type="HAMAP-Rule" id="MF_00161"/>
    </source>
</evidence>
<dbReference type="EC" id="3.4.23.36" evidence="1"/>
<dbReference type="EMBL" id="CP000614">
    <property type="protein sequence ID" value="ABO55586.1"/>
    <property type="molecule type" value="Genomic_DNA"/>
</dbReference>
<dbReference type="SMR" id="A4JH33"/>
<dbReference type="KEGG" id="bvi:Bcep1808_2591"/>
<dbReference type="eggNOG" id="COG0597">
    <property type="taxonomic scope" value="Bacteria"/>
</dbReference>
<dbReference type="HOGENOM" id="CLU_083252_4_0_4"/>
<dbReference type="UniPathway" id="UPA00665"/>
<dbReference type="Proteomes" id="UP000002287">
    <property type="component" value="Chromosome 1"/>
</dbReference>
<dbReference type="GO" id="GO:0005886">
    <property type="term" value="C:plasma membrane"/>
    <property type="evidence" value="ECO:0007669"/>
    <property type="project" value="UniProtKB-SubCell"/>
</dbReference>
<dbReference type="GO" id="GO:0004190">
    <property type="term" value="F:aspartic-type endopeptidase activity"/>
    <property type="evidence" value="ECO:0007669"/>
    <property type="project" value="UniProtKB-UniRule"/>
</dbReference>
<dbReference type="GO" id="GO:0006508">
    <property type="term" value="P:proteolysis"/>
    <property type="evidence" value="ECO:0007669"/>
    <property type="project" value="UniProtKB-KW"/>
</dbReference>
<dbReference type="HAMAP" id="MF_00161">
    <property type="entry name" value="LspA"/>
    <property type="match status" value="1"/>
</dbReference>
<dbReference type="InterPro" id="IPR001872">
    <property type="entry name" value="Peptidase_A8"/>
</dbReference>
<dbReference type="NCBIfam" id="TIGR00077">
    <property type="entry name" value="lspA"/>
    <property type="match status" value="1"/>
</dbReference>
<dbReference type="PANTHER" id="PTHR33695">
    <property type="entry name" value="LIPOPROTEIN SIGNAL PEPTIDASE"/>
    <property type="match status" value="1"/>
</dbReference>
<dbReference type="PANTHER" id="PTHR33695:SF1">
    <property type="entry name" value="LIPOPROTEIN SIGNAL PEPTIDASE"/>
    <property type="match status" value="1"/>
</dbReference>
<dbReference type="Pfam" id="PF01252">
    <property type="entry name" value="Peptidase_A8"/>
    <property type="match status" value="1"/>
</dbReference>
<dbReference type="PRINTS" id="PR00781">
    <property type="entry name" value="LIPOSIGPTASE"/>
</dbReference>
<dbReference type="PROSITE" id="PS00855">
    <property type="entry name" value="SPASE_II"/>
    <property type="match status" value="1"/>
</dbReference>
<gene>
    <name evidence="1" type="primary">lspA</name>
    <name type="ordered locus">Bcep1808_2591</name>
</gene>
<sequence>MAKTLSKPASGALAPWLGISLIVILFDQLSKIAILKTFAYGAQHALTSFFNLVLVYNRGAAFGFLSTASGWQRWAFTALGIGATLVICYLLRRHGQQRLFSLSLALILGGALGNVIDRLLYGHVIDFLDFHLGGWHFPAFNLADSAITVGAVLLIYDELRRVRGTR</sequence>
<keyword id="KW-0064">Aspartyl protease</keyword>
<keyword id="KW-0997">Cell inner membrane</keyword>
<keyword id="KW-1003">Cell membrane</keyword>
<keyword id="KW-0378">Hydrolase</keyword>
<keyword id="KW-0472">Membrane</keyword>
<keyword id="KW-0645">Protease</keyword>
<keyword id="KW-0812">Transmembrane</keyword>
<keyword id="KW-1133">Transmembrane helix</keyword>
<feature type="chain" id="PRO_1000038795" description="Lipoprotein signal peptidase">
    <location>
        <begin position="1"/>
        <end position="166"/>
    </location>
</feature>
<feature type="transmembrane region" description="Helical" evidence="1">
    <location>
        <begin position="9"/>
        <end position="29"/>
    </location>
</feature>
<feature type="transmembrane region" description="Helical" evidence="1">
    <location>
        <begin position="45"/>
        <end position="65"/>
    </location>
</feature>
<feature type="transmembrane region" description="Helical" evidence="1">
    <location>
        <begin position="71"/>
        <end position="91"/>
    </location>
</feature>
<feature type="transmembrane region" description="Helical" evidence="1">
    <location>
        <begin position="99"/>
        <end position="119"/>
    </location>
</feature>
<feature type="transmembrane region" description="Helical" evidence="1">
    <location>
        <begin position="135"/>
        <end position="155"/>
    </location>
</feature>
<feature type="active site" evidence="1">
    <location>
        <position position="126"/>
    </location>
</feature>
<feature type="active site" evidence="1">
    <location>
        <position position="144"/>
    </location>
</feature>
<proteinExistence type="inferred from homology"/>
<name>LSPA_BURVG</name>
<protein>
    <recommendedName>
        <fullName evidence="1">Lipoprotein signal peptidase</fullName>
        <ecNumber evidence="1">3.4.23.36</ecNumber>
    </recommendedName>
    <alternativeName>
        <fullName evidence="1">Prolipoprotein signal peptidase</fullName>
    </alternativeName>
    <alternativeName>
        <fullName evidence="1">Signal peptidase II</fullName>
        <shortName evidence="1">SPase II</shortName>
    </alternativeName>
</protein>